<protein>
    <recommendedName>
        <fullName>Acylphosphatase</fullName>
        <ecNumber>3.6.1.7</ecNumber>
    </recommendedName>
    <alternativeName>
        <fullName>Acylphosphate phosphohydrolase</fullName>
    </alternativeName>
</protein>
<evidence type="ECO:0000255" key="1">
    <source>
        <dbReference type="PROSITE-ProRule" id="PRU00520"/>
    </source>
</evidence>
<evidence type="ECO:0000305" key="2"/>
<proteinExistence type="inferred from homology"/>
<name>ACYP_SYNSC</name>
<sequence length="83" mass="9221">MIEGRVQRVGFRASCNRRALDLGISGWVRNLSDGRVEVQAEGPPLALSELRAWCEVGPPGARVVRVTPSQLPITGDDWFEVRY</sequence>
<feature type="chain" id="PRO_0000326823" description="Acylphosphatase">
    <location>
        <begin position="1"/>
        <end position="83"/>
    </location>
</feature>
<feature type="domain" description="Acylphosphatase-like" evidence="1">
    <location>
        <begin position="1"/>
        <end position="83"/>
    </location>
</feature>
<feature type="active site" evidence="1">
    <location>
        <position position="12"/>
    </location>
</feature>
<feature type="active site" evidence="1">
    <location>
        <position position="30"/>
    </location>
</feature>
<keyword id="KW-0378">Hydrolase</keyword>
<dbReference type="EC" id="3.6.1.7"/>
<dbReference type="EMBL" id="CP000110">
    <property type="protein sequence ID" value="ABB35662.1"/>
    <property type="molecule type" value="Genomic_DNA"/>
</dbReference>
<dbReference type="SMR" id="Q3AIC0"/>
<dbReference type="STRING" id="110662.Syncc9605_1921"/>
<dbReference type="KEGG" id="syd:Syncc9605_1921"/>
<dbReference type="eggNOG" id="COG1254">
    <property type="taxonomic scope" value="Bacteria"/>
</dbReference>
<dbReference type="HOGENOM" id="CLU_141932_3_2_3"/>
<dbReference type="GO" id="GO:0003998">
    <property type="term" value="F:acylphosphatase activity"/>
    <property type="evidence" value="ECO:0007669"/>
    <property type="project" value="UniProtKB-EC"/>
</dbReference>
<dbReference type="Gene3D" id="3.30.70.100">
    <property type="match status" value="1"/>
</dbReference>
<dbReference type="InterPro" id="IPR020456">
    <property type="entry name" value="Acylphosphatase"/>
</dbReference>
<dbReference type="InterPro" id="IPR001792">
    <property type="entry name" value="Acylphosphatase-like_dom"/>
</dbReference>
<dbReference type="InterPro" id="IPR036046">
    <property type="entry name" value="Acylphosphatase-like_dom_sf"/>
</dbReference>
<dbReference type="InterPro" id="IPR017968">
    <property type="entry name" value="Acylphosphatase_CS"/>
</dbReference>
<dbReference type="NCBIfam" id="NF011023">
    <property type="entry name" value="PRK14452.1"/>
    <property type="match status" value="1"/>
</dbReference>
<dbReference type="PANTHER" id="PTHR47268">
    <property type="entry name" value="ACYLPHOSPHATASE"/>
    <property type="match status" value="1"/>
</dbReference>
<dbReference type="PANTHER" id="PTHR47268:SF4">
    <property type="entry name" value="ACYLPHOSPHATASE"/>
    <property type="match status" value="1"/>
</dbReference>
<dbReference type="Pfam" id="PF00708">
    <property type="entry name" value="Acylphosphatase"/>
    <property type="match status" value="1"/>
</dbReference>
<dbReference type="SUPFAM" id="SSF54975">
    <property type="entry name" value="Acylphosphatase/BLUF domain-like"/>
    <property type="match status" value="1"/>
</dbReference>
<dbReference type="PROSITE" id="PS00151">
    <property type="entry name" value="ACYLPHOSPHATASE_2"/>
    <property type="match status" value="1"/>
</dbReference>
<dbReference type="PROSITE" id="PS51160">
    <property type="entry name" value="ACYLPHOSPHATASE_3"/>
    <property type="match status" value="1"/>
</dbReference>
<comment type="catalytic activity">
    <reaction>
        <text>an acyl phosphate + H2O = a carboxylate + phosphate + H(+)</text>
        <dbReference type="Rhea" id="RHEA:14965"/>
        <dbReference type="ChEBI" id="CHEBI:15377"/>
        <dbReference type="ChEBI" id="CHEBI:15378"/>
        <dbReference type="ChEBI" id="CHEBI:29067"/>
        <dbReference type="ChEBI" id="CHEBI:43474"/>
        <dbReference type="ChEBI" id="CHEBI:59918"/>
        <dbReference type="EC" id="3.6.1.7"/>
    </reaction>
</comment>
<comment type="similarity">
    <text evidence="2">Belongs to the acylphosphatase family.</text>
</comment>
<organism>
    <name type="scientific">Synechococcus sp. (strain CC9605)</name>
    <dbReference type="NCBI Taxonomy" id="110662"/>
    <lineage>
        <taxon>Bacteria</taxon>
        <taxon>Bacillati</taxon>
        <taxon>Cyanobacteriota</taxon>
        <taxon>Cyanophyceae</taxon>
        <taxon>Synechococcales</taxon>
        <taxon>Synechococcaceae</taxon>
        <taxon>Synechococcus</taxon>
    </lineage>
</organism>
<reference key="1">
    <citation type="submission" date="2005-07" db="EMBL/GenBank/DDBJ databases">
        <title>Complete sequence of Synechococcus sp. CC9605.</title>
        <authorList>
            <consortium name="US DOE Joint Genome Institute"/>
            <person name="Copeland A."/>
            <person name="Lucas S."/>
            <person name="Lapidus A."/>
            <person name="Barry K."/>
            <person name="Detter J.C."/>
            <person name="Glavina T."/>
            <person name="Hammon N."/>
            <person name="Israni S."/>
            <person name="Pitluck S."/>
            <person name="Schmutz J."/>
            <person name="Martinez M."/>
            <person name="Larimer F."/>
            <person name="Land M."/>
            <person name="Kyrpides N."/>
            <person name="Ivanova N."/>
            <person name="Richardson P."/>
        </authorList>
    </citation>
    <scope>NUCLEOTIDE SEQUENCE [LARGE SCALE GENOMIC DNA]</scope>
    <source>
        <strain>CC9605</strain>
    </source>
</reference>
<accession>Q3AIC0</accession>
<gene>
    <name type="primary">acyP</name>
    <name type="ordered locus">Syncc9605_1921</name>
</gene>